<protein>
    <recommendedName>
        <fullName evidence="1">Probable [Fe-S]-dependent transcriptional repressor</fullName>
    </recommendedName>
</protein>
<gene>
    <name evidence="1" type="primary">feoC</name>
    <name type="ordered locus">SPAB_04364</name>
</gene>
<dbReference type="EMBL" id="CP000886">
    <property type="protein sequence ID" value="ABX69680.1"/>
    <property type="molecule type" value="Genomic_DNA"/>
</dbReference>
<dbReference type="RefSeq" id="WP_000157589.1">
    <property type="nucleotide sequence ID" value="NC_010102.1"/>
</dbReference>
<dbReference type="SMR" id="A9MTS5"/>
<dbReference type="KEGG" id="spq:SPAB_04364"/>
<dbReference type="PATRIC" id="fig|1016998.12.peg.4108"/>
<dbReference type="HOGENOM" id="CLU_189182_0_0_6"/>
<dbReference type="BioCyc" id="SENT1016998:SPAB_RS17765-MONOMER"/>
<dbReference type="Proteomes" id="UP000008556">
    <property type="component" value="Chromosome"/>
</dbReference>
<dbReference type="GO" id="GO:0003677">
    <property type="term" value="F:DNA binding"/>
    <property type="evidence" value="ECO:0007669"/>
    <property type="project" value="UniProtKB-KW"/>
</dbReference>
<dbReference type="GO" id="GO:0005506">
    <property type="term" value="F:iron ion binding"/>
    <property type="evidence" value="ECO:0007669"/>
    <property type="project" value="UniProtKB-UniRule"/>
</dbReference>
<dbReference type="GO" id="GO:0051536">
    <property type="term" value="F:iron-sulfur cluster binding"/>
    <property type="evidence" value="ECO:0007669"/>
    <property type="project" value="UniProtKB-KW"/>
</dbReference>
<dbReference type="Gene3D" id="1.10.10.10">
    <property type="entry name" value="Winged helix-like DNA-binding domain superfamily/Winged helix DNA-binding domain"/>
    <property type="match status" value="1"/>
</dbReference>
<dbReference type="HAMAP" id="MF_01586">
    <property type="entry name" value="FeoC"/>
    <property type="match status" value="1"/>
</dbReference>
<dbReference type="InterPro" id="IPR023732">
    <property type="entry name" value="FeoC"/>
</dbReference>
<dbReference type="InterPro" id="IPR015102">
    <property type="entry name" value="Tscrpt_reg_HTH_FeoC"/>
</dbReference>
<dbReference type="InterPro" id="IPR036388">
    <property type="entry name" value="WH-like_DNA-bd_sf"/>
</dbReference>
<dbReference type="InterPro" id="IPR036390">
    <property type="entry name" value="WH_DNA-bd_sf"/>
</dbReference>
<dbReference type="NCBIfam" id="NF011960">
    <property type="entry name" value="PRK15431.1"/>
    <property type="match status" value="1"/>
</dbReference>
<dbReference type="Pfam" id="PF09012">
    <property type="entry name" value="FeoC"/>
    <property type="match status" value="1"/>
</dbReference>
<dbReference type="SUPFAM" id="SSF46785">
    <property type="entry name" value="Winged helix' DNA-binding domain"/>
    <property type="match status" value="1"/>
</dbReference>
<proteinExistence type="inferred from homology"/>
<organism>
    <name type="scientific">Salmonella paratyphi B (strain ATCC BAA-1250 / SPB7)</name>
    <dbReference type="NCBI Taxonomy" id="1016998"/>
    <lineage>
        <taxon>Bacteria</taxon>
        <taxon>Pseudomonadati</taxon>
        <taxon>Pseudomonadota</taxon>
        <taxon>Gammaproteobacteria</taxon>
        <taxon>Enterobacterales</taxon>
        <taxon>Enterobacteriaceae</taxon>
        <taxon>Salmonella</taxon>
    </lineage>
</organism>
<reference key="1">
    <citation type="submission" date="2007-11" db="EMBL/GenBank/DDBJ databases">
        <authorList>
            <consortium name="The Salmonella enterica serovar Paratyphi B Genome Sequencing Project"/>
            <person name="McClelland M."/>
            <person name="Sanderson E.K."/>
            <person name="Porwollik S."/>
            <person name="Spieth J."/>
            <person name="Clifton W.S."/>
            <person name="Fulton R."/>
            <person name="Cordes M."/>
            <person name="Wollam A."/>
            <person name="Shah N."/>
            <person name="Pepin K."/>
            <person name="Bhonagiri V."/>
            <person name="Nash W."/>
            <person name="Johnson M."/>
            <person name="Thiruvilangam P."/>
            <person name="Wilson R."/>
        </authorList>
    </citation>
    <scope>NUCLEOTIDE SEQUENCE [LARGE SCALE GENOMIC DNA]</scope>
    <source>
        <strain>ATCC BAA-1250 / SPB7</strain>
    </source>
</reference>
<sequence>MASLIQVRDLLALRGRMEATQISHTLHAPQPMIDAMLNQLEIMGKAVRIPEEPDGCLSGSCKSCPEGKACLREWWALR</sequence>
<comment type="function">
    <text evidence="1">May function as a transcriptional regulator that controls feoABC expression.</text>
</comment>
<comment type="similarity">
    <text evidence="1">Belongs to the FeoC family.</text>
</comment>
<name>FEOC_SALPB</name>
<evidence type="ECO:0000255" key="1">
    <source>
        <dbReference type="HAMAP-Rule" id="MF_01586"/>
    </source>
</evidence>
<accession>A9MTS5</accession>
<keyword id="KW-0238">DNA-binding</keyword>
<keyword id="KW-0408">Iron</keyword>
<keyword id="KW-0411">Iron-sulfur</keyword>
<keyword id="KW-0479">Metal-binding</keyword>
<keyword id="KW-0678">Repressor</keyword>
<keyword id="KW-0804">Transcription</keyword>
<keyword id="KW-0805">Transcription regulation</keyword>
<feature type="chain" id="PRO_1000087955" description="Probable [Fe-S]-dependent transcriptional repressor">
    <location>
        <begin position="1"/>
        <end position="78"/>
    </location>
</feature>
<feature type="binding site" evidence="1">
    <location>
        <position position="56"/>
    </location>
    <ligand>
        <name>iron-sulfur cluster</name>
        <dbReference type="ChEBI" id="CHEBI:30408"/>
    </ligand>
</feature>
<feature type="binding site" evidence="1">
    <location>
        <position position="61"/>
    </location>
    <ligand>
        <name>iron-sulfur cluster</name>
        <dbReference type="ChEBI" id="CHEBI:30408"/>
    </ligand>
</feature>
<feature type="binding site" evidence="1">
    <location>
        <position position="64"/>
    </location>
    <ligand>
        <name>iron-sulfur cluster</name>
        <dbReference type="ChEBI" id="CHEBI:30408"/>
    </ligand>
</feature>
<feature type="binding site" evidence="1">
    <location>
        <position position="70"/>
    </location>
    <ligand>
        <name>iron-sulfur cluster</name>
        <dbReference type="ChEBI" id="CHEBI:30408"/>
    </ligand>
</feature>